<protein>
    <recommendedName>
        <fullName>Universal stress protein A</fullName>
    </recommendedName>
</protein>
<evidence type="ECO:0000250" key="1"/>
<evidence type="ECO:0000305" key="2"/>
<accession>Q8ZLD7</accession>
<reference key="1">
    <citation type="journal article" date="2001" name="Nature">
        <title>Complete genome sequence of Salmonella enterica serovar Typhimurium LT2.</title>
        <authorList>
            <person name="McClelland M."/>
            <person name="Sanderson K.E."/>
            <person name="Spieth J."/>
            <person name="Clifton S.W."/>
            <person name="Latreille P."/>
            <person name="Courtney L."/>
            <person name="Porwollik S."/>
            <person name="Ali J."/>
            <person name="Dante M."/>
            <person name="Du F."/>
            <person name="Hou S."/>
            <person name="Layman D."/>
            <person name="Leonard S."/>
            <person name="Nguyen C."/>
            <person name="Scott K."/>
            <person name="Holmes A."/>
            <person name="Grewal N."/>
            <person name="Mulvaney E."/>
            <person name="Ryan E."/>
            <person name="Sun H."/>
            <person name="Florea L."/>
            <person name="Miller W."/>
            <person name="Stoneking T."/>
            <person name="Nhan M."/>
            <person name="Waterston R."/>
            <person name="Wilson R.K."/>
        </authorList>
    </citation>
    <scope>NUCLEOTIDE SEQUENCE [LARGE SCALE GENOMIC DNA]</scope>
    <source>
        <strain>LT2 / SGSC1412 / ATCC 700720</strain>
    </source>
</reference>
<name>USPA_SALTY</name>
<organism>
    <name type="scientific">Salmonella typhimurium (strain LT2 / SGSC1412 / ATCC 700720)</name>
    <dbReference type="NCBI Taxonomy" id="99287"/>
    <lineage>
        <taxon>Bacteria</taxon>
        <taxon>Pseudomonadati</taxon>
        <taxon>Pseudomonadota</taxon>
        <taxon>Gammaproteobacteria</taxon>
        <taxon>Enterobacterales</taxon>
        <taxon>Enterobacteriaceae</taxon>
        <taxon>Salmonella</taxon>
    </lineage>
</organism>
<sequence length="144" mass="16080">MAYKHILIAVDLSPESKVLVEKAVSMARPYNAKISLIHVDVNYSDLYTGLIDVNLGDMQKRISEETHHALTELSTNAGYPITETLSGSGDLGQVLVDAIKKYDMDLVVCGHHQDFWSKLMSSARQLINTVHVDMLIVPLRDEEE</sequence>
<comment type="function">
    <text evidence="1">Required for resistance to DNA-damaging agents.</text>
</comment>
<comment type="subunit">
    <text evidence="1">Homodimer.</text>
</comment>
<comment type="subcellular location">
    <subcellularLocation>
        <location evidence="1">Cytoplasm</location>
    </subcellularLocation>
</comment>
<comment type="similarity">
    <text evidence="2">Belongs to the universal stress protein A family.</text>
</comment>
<gene>
    <name type="primary">uspA</name>
    <name type="ordered locus">STM3591</name>
</gene>
<dbReference type="EMBL" id="AE006468">
    <property type="protein sequence ID" value="AAL22451.1"/>
    <property type="molecule type" value="Genomic_DNA"/>
</dbReference>
<dbReference type="RefSeq" id="NP_462492.1">
    <property type="nucleotide sequence ID" value="NC_003197.2"/>
</dbReference>
<dbReference type="RefSeq" id="WP_000323565.1">
    <property type="nucleotide sequence ID" value="NC_003197.2"/>
</dbReference>
<dbReference type="SMR" id="Q8ZLD7"/>
<dbReference type="STRING" id="99287.STM3591"/>
<dbReference type="PaxDb" id="99287-STM3591"/>
<dbReference type="GeneID" id="1255114"/>
<dbReference type="GeneID" id="66757915"/>
<dbReference type="KEGG" id="stm:STM3591"/>
<dbReference type="PATRIC" id="fig|99287.12.peg.3795"/>
<dbReference type="HOGENOM" id="CLU_049301_18_0_6"/>
<dbReference type="OMA" id="MNTVPCD"/>
<dbReference type="PhylomeDB" id="Q8ZLD7"/>
<dbReference type="BioCyc" id="SENT99287:STM3591-MONOMER"/>
<dbReference type="Proteomes" id="UP000001014">
    <property type="component" value="Chromosome"/>
</dbReference>
<dbReference type="GO" id="GO:0005737">
    <property type="term" value="C:cytoplasm"/>
    <property type="evidence" value="ECO:0007669"/>
    <property type="project" value="UniProtKB-SubCell"/>
</dbReference>
<dbReference type="GO" id="GO:0006950">
    <property type="term" value="P:response to stress"/>
    <property type="evidence" value="ECO:0000318"/>
    <property type="project" value="GO_Central"/>
</dbReference>
<dbReference type="CDD" id="cd23657">
    <property type="entry name" value="USP-A-like"/>
    <property type="match status" value="1"/>
</dbReference>
<dbReference type="FunFam" id="3.40.50.620:FF:000014">
    <property type="entry name" value="Universal stress protein"/>
    <property type="match status" value="1"/>
</dbReference>
<dbReference type="Gene3D" id="3.40.50.620">
    <property type="entry name" value="HUPs"/>
    <property type="match status" value="1"/>
</dbReference>
<dbReference type="InterPro" id="IPR014729">
    <property type="entry name" value="Rossmann-like_a/b/a_fold"/>
</dbReference>
<dbReference type="InterPro" id="IPR006015">
    <property type="entry name" value="Universal_stress_UspA"/>
</dbReference>
<dbReference type="InterPro" id="IPR006016">
    <property type="entry name" value="UspA"/>
</dbReference>
<dbReference type="NCBIfam" id="NF011698">
    <property type="entry name" value="PRK15118.1"/>
    <property type="match status" value="1"/>
</dbReference>
<dbReference type="PANTHER" id="PTHR46268">
    <property type="entry name" value="STRESS RESPONSE PROTEIN NHAX"/>
    <property type="match status" value="1"/>
</dbReference>
<dbReference type="PANTHER" id="PTHR46268:SF23">
    <property type="entry name" value="UNIVERSAL STRESS PROTEIN A-RELATED"/>
    <property type="match status" value="1"/>
</dbReference>
<dbReference type="Pfam" id="PF00582">
    <property type="entry name" value="Usp"/>
    <property type="match status" value="1"/>
</dbReference>
<dbReference type="PIRSF" id="PIRSF006276">
    <property type="entry name" value="UspA"/>
    <property type="match status" value="1"/>
</dbReference>
<dbReference type="SUPFAM" id="SSF52402">
    <property type="entry name" value="Adenine nucleotide alpha hydrolases-like"/>
    <property type="match status" value="1"/>
</dbReference>
<proteinExistence type="inferred from homology"/>
<feature type="initiator methionine" description="Removed" evidence="1">
    <location>
        <position position="1"/>
    </location>
</feature>
<feature type="chain" id="PRO_0000147404" description="Universal stress protein A">
    <location>
        <begin position="2"/>
        <end position="144"/>
    </location>
</feature>
<keyword id="KW-0963">Cytoplasm</keyword>
<keyword id="KW-1185">Reference proteome</keyword>